<gene>
    <name type="ordered locus">STM1619</name>
</gene>
<evidence type="ECO:0000250" key="1">
    <source>
        <dbReference type="UniProtKB" id="Q9R381"/>
    </source>
</evidence>
<evidence type="ECO:0000255" key="2">
    <source>
        <dbReference type="PROSITE-ProRule" id="PRU00532"/>
    </source>
</evidence>
<evidence type="ECO:0000312" key="3">
    <source>
        <dbReference type="EMBL" id="AAL20537.1"/>
    </source>
</evidence>
<accession>Q8ZPB6</accession>
<dbReference type="EC" id="2.3.1.82" evidence="1"/>
<dbReference type="EMBL" id="AE006468">
    <property type="protein sequence ID" value="AAL20537.1"/>
    <property type="molecule type" value="Genomic_DNA"/>
</dbReference>
<dbReference type="RefSeq" id="NP_460578.1">
    <property type="nucleotide sequence ID" value="NC_003197.2"/>
</dbReference>
<dbReference type="SMR" id="Q8ZPB6"/>
<dbReference type="STRING" id="99287.STM1619"/>
<dbReference type="CARD" id="ARO:3002571">
    <property type="molecule name" value="AAC(6')-Iaa"/>
    <property type="mechanism identifier" value="ARO:0001004"/>
    <property type="mechanism name" value="antibiotic inactivation"/>
</dbReference>
<dbReference type="PaxDb" id="99287-STM1619"/>
<dbReference type="GeneID" id="1253137"/>
<dbReference type="KEGG" id="ag:AAL20537"/>
<dbReference type="KEGG" id="stm:STM1619"/>
<dbReference type="PATRIC" id="fig|99287.12.peg.1710"/>
<dbReference type="HOGENOM" id="CLU_127011_0_0_6"/>
<dbReference type="PhylomeDB" id="Q8ZPB6"/>
<dbReference type="BioCyc" id="SENT99287:STM1619-MONOMER"/>
<dbReference type="Proteomes" id="UP000001014">
    <property type="component" value="Chromosome"/>
</dbReference>
<dbReference type="GO" id="GO:0047663">
    <property type="term" value="F:aminoglycoside 6'-N-acetyltransferase activity"/>
    <property type="evidence" value="ECO:0007669"/>
    <property type="project" value="UniProtKB-EC"/>
</dbReference>
<dbReference type="GO" id="GO:0046677">
    <property type="term" value="P:response to antibiotic"/>
    <property type="evidence" value="ECO:0007669"/>
    <property type="project" value="UniProtKB-KW"/>
</dbReference>
<dbReference type="CDD" id="cd04301">
    <property type="entry name" value="NAT_SF"/>
    <property type="match status" value="1"/>
</dbReference>
<dbReference type="FunFam" id="3.40.630.30:FF:000111">
    <property type="entry name" value="Aminoglycoside N(6')-acetyltransferase type 1"/>
    <property type="match status" value="1"/>
</dbReference>
<dbReference type="Gene3D" id="3.40.630.30">
    <property type="match status" value="1"/>
</dbReference>
<dbReference type="InterPro" id="IPR016181">
    <property type="entry name" value="Acyl_CoA_acyltransferase"/>
</dbReference>
<dbReference type="InterPro" id="IPR024170">
    <property type="entry name" value="Aminoglycoside_N6-AcTrfrase"/>
</dbReference>
<dbReference type="InterPro" id="IPR050832">
    <property type="entry name" value="Bact_Acetyltransf"/>
</dbReference>
<dbReference type="InterPro" id="IPR000182">
    <property type="entry name" value="GNAT_dom"/>
</dbReference>
<dbReference type="NCBIfam" id="NF043067">
    <property type="entry name" value="AAC_6p_group_E"/>
    <property type="match status" value="1"/>
</dbReference>
<dbReference type="NCBIfam" id="NF000140">
    <property type="entry name" value="AAC_6p_Salmo"/>
    <property type="match status" value="1"/>
</dbReference>
<dbReference type="PANTHER" id="PTHR43877">
    <property type="entry name" value="AMINOALKYLPHOSPHONATE N-ACETYLTRANSFERASE-RELATED-RELATED"/>
    <property type="match status" value="1"/>
</dbReference>
<dbReference type="Pfam" id="PF00583">
    <property type="entry name" value="Acetyltransf_1"/>
    <property type="match status" value="1"/>
</dbReference>
<dbReference type="PIRSF" id="PIRSF000452">
    <property type="entry name" value="6-N-acetyltransf"/>
    <property type="match status" value="1"/>
</dbReference>
<dbReference type="SUPFAM" id="SSF55729">
    <property type="entry name" value="Acyl-CoA N-acyltransferases (Nat)"/>
    <property type="match status" value="1"/>
</dbReference>
<dbReference type="PROSITE" id="PS51186">
    <property type="entry name" value="GNAT"/>
    <property type="match status" value="1"/>
</dbReference>
<proteinExistence type="inferred from homology"/>
<comment type="function">
    <text evidence="1">Catalyzes the transfer of an acetyl group from acetyl-CoA to the 6'-amino group of aminoglycoside molecules conferring resistance to antibiotics containing the purpurosamine ring.</text>
</comment>
<comment type="catalytic activity">
    <reaction evidence="1">
        <text>kanamycin B + acetyl-CoA = N(6')-acetylkanamycin B + CoA + H(+)</text>
        <dbReference type="Rhea" id="RHEA:16449"/>
        <dbReference type="ChEBI" id="CHEBI:15378"/>
        <dbReference type="ChEBI" id="CHEBI:57287"/>
        <dbReference type="ChEBI" id="CHEBI:57288"/>
        <dbReference type="ChEBI" id="CHEBI:58390"/>
        <dbReference type="ChEBI" id="CHEBI:58549"/>
        <dbReference type="EC" id="2.3.1.82"/>
    </reaction>
</comment>
<comment type="subunit">
    <text evidence="1">Homodimer.</text>
</comment>
<sequence length="145" mass="16376">MDIRQMNRTHLDHWRGLRKQLWPGHPDDAHLADGEEILQADHLASFIAMADGVAIGFADASIRHDYVNGCDSSPVVFLEGIFVLPSFRQRGVAKQLIAAVQRWGTNKGCREMASDTSPENTISQKVHQALGFEETERVIFYRKRC</sequence>
<name>AAC6_SALTY</name>
<protein>
    <recommendedName>
        <fullName evidence="1">Aminoglycoside N(6')-acetyltransferase type 1</fullName>
        <ecNumber evidence="1">2.3.1.82</ecNumber>
    </recommendedName>
    <alternativeName>
        <fullName evidence="1">AAC(6')-I</fullName>
    </alternativeName>
    <alternativeName>
        <fullName evidence="1">Aminoglycoside resistance protein</fullName>
    </alternativeName>
</protein>
<organism>
    <name type="scientific">Salmonella typhimurium (strain LT2 / SGSC1412 / ATCC 700720)</name>
    <dbReference type="NCBI Taxonomy" id="99287"/>
    <lineage>
        <taxon>Bacteria</taxon>
        <taxon>Pseudomonadati</taxon>
        <taxon>Pseudomonadota</taxon>
        <taxon>Gammaproteobacteria</taxon>
        <taxon>Enterobacterales</taxon>
        <taxon>Enterobacteriaceae</taxon>
        <taxon>Salmonella</taxon>
    </lineage>
</organism>
<reference evidence="3" key="1">
    <citation type="journal article" date="2001" name="Nature">
        <title>Complete genome sequence of Salmonella enterica serovar Typhimurium LT2.</title>
        <authorList>
            <person name="McClelland M."/>
            <person name="Sanderson K.E."/>
            <person name="Spieth J."/>
            <person name="Clifton S.W."/>
            <person name="Latreille P."/>
            <person name="Courtney L."/>
            <person name="Porwollik S."/>
            <person name="Ali J."/>
            <person name="Dante M."/>
            <person name="Du F."/>
            <person name="Hou S."/>
            <person name="Layman D."/>
            <person name="Leonard S."/>
            <person name="Nguyen C."/>
            <person name="Scott K."/>
            <person name="Holmes A."/>
            <person name="Grewal N."/>
            <person name="Mulvaney E."/>
            <person name="Ryan E."/>
            <person name="Sun H."/>
            <person name="Florea L."/>
            <person name="Miller W."/>
            <person name="Stoneking T."/>
            <person name="Nhan M."/>
            <person name="Waterston R."/>
            <person name="Wilson R.K."/>
        </authorList>
    </citation>
    <scope>NUCLEOTIDE SEQUENCE [LARGE SCALE GENOMIC DNA]</scope>
    <source>
        <strain>LT2 / SGSC1412 / ATCC 700720</strain>
    </source>
</reference>
<keyword id="KW-0012">Acyltransferase</keyword>
<keyword id="KW-0046">Antibiotic resistance</keyword>
<keyword id="KW-1185">Reference proteome</keyword>
<keyword id="KW-0808">Transferase</keyword>
<feature type="chain" id="PRO_0000416835" description="Aminoglycoside N(6')-acetyltransferase type 1">
    <location>
        <begin position="1"/>
        <end position="145"/>
    </location>
</feature>
<feature type="domain" description="N-acetyltransferase" evidence="2">
    <location>
        <begin position="1"/>
        <end position="145"/>
    </location>
</feature>
<feature type="binding site" evidence="1">
    <location>
        <position position="22"/>
    </location>
    <ligand>
        <name>substrate</name>
    </ligand>
</feature>
<feature type="binding site" evidence="1">
    <location>
        <position position="25"/>
    </location>
    <ligand>
        <name>substrate</name>
    </ligand>
</feature>
<feature type="binding site" evidence="1">
    <location>
        <position position="66"/>
    </location>
    <ligand>
        <name>substrate</name>
    </ligand>
</feature>
<feature type="binding site" evidence="1">
    <location>
        <position position="79"/>
    </location>
    <ligand>
        <name>substrate</name>
    </ligand>
</feature>
<feature type="binding site" evidence="1">
    <location>
        <begin position="81"/>
        <end position="83"/>
    </location>
    <ligand>
        <name>acetyl-CoA</name>
        <dbReference type="ChEBI" id="CHEBI:57288"/>
    </ligand>
</feature>
<feature type="binding site" evidence="1">
    <location>
        <begin position="89"/>
        <end position="94"/>
    </location>
    <ligand>
        <name>acetyl-CoA</name>
        <dbReference type="ChEBI" id="CHEBI:57288"/>
    </ligand>
</feature>
<feature type="binding site" evidence="1">
    <location>
        <position position="115"/>
    </location>
    <ligand>
        <name>substrate</name>
    </ligand>
</feature>
<feature type="binding site" evidence="1">
    <location>
        <position position="120"/>
    </location>
    <ligand>
        <name>acetyl-CoA</name>
        <dbReference type="ChEBI" id="CHEBI:57288"/>
    </ligand>
</feature>
<feature type="binding site" evidence="1">
    <location>
        <position position="136"/>
    </location>
    <ligand>
        <name>substrate</name>
    </ligand>
</feature>